<accession>A4WJ90</accession>
<evidence type="ECO:0000255" key="1">
    <source>
        <dbReference type="HAMAP-Rule" id="MF_00648"/>
    </source>
</evidence>
<proteinExistence type="inferred from homology"/>
<organism>
    <name type="scientific">Pyrobaculum arsenaticum (strain DSM 13514 / JCM 11321 / PZ6)</name>
    <dbReference type="NCBI Taxonomy" id="340102"/>
    <lineage>
        <taxon>Archaea</taxon>
        <taxon>Thermoproteota</taxon>
        <taxon>Thermoprotei</taxon>
        <taxon>Thermoproteales</taxon>
        <taxon>Thermoproteaceae</taxon>
        <taxon>Pyrobaculum</taxon>
    </lineage>
</organism>
<sequence>MIVAAGTKNPNKIKAVKDAYRLFGFPAEVVPVGRPAGTPPQPVGLEEVVKGAVARAKAALEAVPGAEHGVGVEAGAVHAGGAHLDITVAAIADRGGAVTLGFGPAFQIPTAFLPDVLKGVELGELAERYFKKPSVGYREGIIGVLTGRRVTRYQLNLAAVAMALVPRLPKNAKLYRT</sequence>
<keyword id="KW-0378">Hydrolase</keyword>
<keyword id="KW-0460">Magnesium</keyword>
<keyword id="KW-0464">Manganese</keyword>
<keyword id="KW-0479">Metal-binding</keyword>
<keyword id="KW-0546">Nucleotide metabolism</keyword>
<keyword id="KW-0547">Nucleotide-binding</keyword>
<protein>
    <recommendedName>
        <fullName evidence="1">Probable inosine/xanthosine triphosphatase</fullName>
        <shortName evidence="1">ITPase/XTPase</shortName>
        <ecNumber evidence="1">3.6.1.73</ecNumber>
    </recommendedName>
    <alternativeName>
        <fullName evidence="1">Non-canonical purine NTP phosphatase</fullName>
    </alternativeName>
    <alternativeName>
        <fullName evidence="1">Non-standard purine NTP phosphatase</fullName>
    </alternativeName>
    <alternativeName>
        <fullName evidence="1">Nucleoside-triphosphate phosphatase</fullName>
        <shortName evidence="1">NTPase</shortName>
    </alternativeName>
</protein>
<gene>
    <name type="ordered locus">Pars_0872</name>
</gene>
<reference key="1">
    <citation type="submission" date="2007-04" db="EMBL/GenBank/DDBJ databases">
        <title>Complete sequence of Pyrobaculum arsenaticum DSM 13514.</title>
        <authorList>
            <consortium name="US DOE Joint Genome Institute"/>
            <person name="Copeland A."/>
            <person name="Lucas S."/>
            <person name="Lapidus A."/>
            <person name="Barry K."/>
            <person name="Glavina del Rio T."/>
            <person name="Dalin E."/>
            <person name="Tice H."/>
            <person name="Pitluck S."/>
            <person name="Chain P."/>
            <person name="Malfatti S."/>
            <person name="Shin M."/>
            <person name="Vergez L."/>
            <person name="Schmutz J."/>
            <person name="Larimer F."/>
            <person name="Land M."/>
            <person name="Hauser L."/>
            <person name="Kyrpides N."/>
            <person name="Mikhailova N."/>
            <person name="Cozen A.E."/>
            <person name="Fitz-Gibbon S.T."/>
            <person name="House C.H."/>
            <person name="Saltikov C."/>
            <person name="Lowe T.M."/>
            <person name="Richardson P."/>
        </authorList>
    </citation>
    <scope>NUCLEOTIDE SEQUENCE [LARGE SCALE GENOMIC DNA]</scope>
    <source>
        <strain>ATCC 700994 / DSM 13514 / JCM 11321 / PZ6</strain>
    </source>
</reference>
<name>NCPP_PYRAR</name>
<feature type="chain" id="PRO_1000056954" description="Probable inosine/xanthosine triphosphatase">
    <location>
        <begin position="1"/>
        <end position="177"/>
    </location>
</feature>
<dbReference type="EC" id="3.6.1.73" evidence="1"/>
<dbReference type="EMBL" id="CP000660">
    <property type="protein sequence ID" value="ABP50457.1"/>
    <property type="molecule type" value="Genomic_DNA"/>
</dbReference>
<dbReference type="SMR" id="A4WJ90"/>
<dbReference type="STRING" id="340102.Pars_0872"/>
<dbReference type="KEGG" id="pas:Pars_0872"/>
<dbReference type="HOGENOM" id="CLU_087417_0_1_2"/>
<dbReference type="OrthoDB" id="52857at2157"/>
<dbReference type="PhylomeDB" id="A4WJ90"/>
<dbReference type="Proteomes" id="UP000001567">
    <property type="component" value="Chromosome"/>
</dbReference>
<dbReference type="GO" id="GO:0103023">
    <property type="term" value="F:ITPase activity"/>
    <property type="evidence" value="ECO:0007669"/>
    <property type="project" value="UniProtKB-EC"/>
</dbReference>
<dbReference type="GO" id="GO:0046872">
    <property type="term" value="F:metal ion binding"/>
    <property type="evidence" value="ECO:0007669"/>
    <property type="project" value="UniProtKB-KW"/>
</dbReference>
<dbReference type="GO" id="GO:0000166">
    <property type="term" value="F:nucleotide binding"/>
    <property type="evidence" value="ECO:0007669"/>
    <property type="project" value="UniProtKB-KW"/>
</dbReference>
<dbReference type="GO" id="GO:0017111">
    <property type="term" value="F:ribonucleoside triphosphate phosphatase activity"/>
    <property type="evidence" value="ECO:0000250"/>
    <property type="project" value="UniProtKB"/>
</dbReference>
<dbReference type="GO" id="GO:0009117">
    <property type="term" value="P:nucleotide metabolic process"/>
    <property type="evidence" value="ECO:0007669"/>
    <property type="project" value="UniProtKB-KW"/>
</dbReference>
<dbReference type="GO" id="GO:0006772">
    <property type="term" value="P:thiamine metabolic process"/>
    <property type="evidence" value="ECO:0007669"/>
    <property type="project" value="TreeGrafter"/>
</dbReference>
<dbReference type="FunFam" id="3.90.950.10:FF:000002">
    <property type="entry name" value="Inosine/xanthosine triphosphatase"/>
    <property type="match status" value="1"/>
</dbReference>
<dbReference type="Gene3D" id="3.90.950.10">
    <property type="match status" value="1"/>
</dbReference>
<dbReference type="HAMAP" id="MF_00648">
    <property type="entry name" value="Non_canon_purine_NTPase_YjjX"/>
    <property type="match status" value="1"/>
</dbReference>
<dbReference type="InterPro" id="IPR029001">
    <property type="entry name" value="ITPase-like_fam"/>
</dbReference>
<dbReference type="InterPro" id="IPR002786">
    <property type="entry name" value="Non_canon_purine_NTPase"/>
</dbReference>
<dbReference type="InterPro" id="IPR026533">
    <property type="entry name" value="NTPase/PRRC1"/>
</dbReference>
<dbReference type="InterPro" id="IPR050299">
    <property type="entry name" value="YjjX_NTPase"/>
</dbReference>
<dbReference type="NCBIfam" id="TIGR00258">
    <property type="entry name" value="inosine/xanthosine triphosphatase"/>
    <property type="match status" value="1"/>
</dbReference>
<dbReference type="PANTHER" id="PTHR34699">
    <property type="match status" value="1"/>
</dbReference>
<dbReference type="PANTHER" id="PTHR34699:SF2">
    <property type="entry name" value="NON-CANONICAL PURINE NTP PHOSPHATASE_PRRC1 DOMAIN-CONTAINING PROTEIN"/>
    <property type="match status" value="1"/>
</dbReference>
<dbReference type="Pfam" id="PF01931">
    <property type="entry name" value="NTPase_I-T"/>
    <property type="match status" value="1"/>
</dbReference>
<dbReference type="SUPFAM" id="SSF52972">
    <property type="entry name" value="ITPase-like"/>
    <property type="match status" value="1"/>
</dbReference>
<comment type="function">
    <text evidence="1">Phosphatase that hydrolyzes non-canonical purine nucleotides such as XTP and ITP to their respective diphosphate derivatives. Probably excludes non-canonical purines from DNA/RNA precursor pool, thus preventing their incorporation into DNA/RNA and avoiding chromosomal lesions.</text>
</comment>
<comment type="catalytic activity">
    <reaction evidence="1">
        <text>XTP + H2O = XDP + phosphate + H(+)</text>
        <dbReference type="Rhea" id="RHEA:28406"/>
        <dbReference type="ChEBI" id="CHEBI:15377"/>
        <dbReference type="ChEBI" id="CHEBI:15378"/>
        <dbReference type="ChEBI" id="CHEBI:43474"/>
        <dbReference type="ChEBI" id="CHEBI:59884"/>
        <dbReference type="ChEBI" id="CHEBI:61314"/>
        <dbReference type="EC" id="3.6.1.73"/>
    </reaction>
</comment>
<comment type="catalytic activity">
    <reaction evidence="1">
        <text>ITP + H2O = IDP + phosphate + H(+)</text>
        <dbReference type="Rhea" id="RHEA:28330"/>
        <dbReference type="ChEBI" id="CHEBI:15377"/>
        <dbReference type="ChEBI" id="CHEBI:15378"/>
        <dbReference type="ChEBI" id="CHEBI:43474"/>
        <dbReference type="ChEBI" id="CHEBI:58280"/>
        <dbReference type="ChEBI" id="CHEBI:61402"/>
        <dbReference type="EC" id="3.6.1.73"/>
    </reaction>
</comment>
<comment type="cofactor">
    <cofactor evidence="1">
        <name>Mg(2+)</name>
        <dbReference type="ChEBI" id="CHEBI:18420"/>
    </cofactor>
    <cofactor evidence="1">
        <name>Mn(2+)</name>
        <dbReference type="ChEBI" id="CHEBI:29035"/>
    </cofactor>
    <text evidence="1">Binds 1 divalent metal cation per subunit; can use either Mg(2+) or Mn(2+).</text>
</comment>
<comment type="subunit">
    <text evidence="1">Homodimer.</text>
</comment>
<comment type="similarity">
    <text evidence="1">Belongs to the YjjX NTPase family.</text>
</comment>